<evidence type="ECO:0000250" key="1">
    <source>
        <dbReference type="UniProtKB" id="Q57071"/>
    </source>
</evidence>
<evidence type="ECO:0000255" key="2">
    <source>
        <dbReference type="PROSITE-ProRule" id="PRU00416"/>
    </source>
</evidence>
<evidence type="ECO:0000255" key="3">
    <source>
        <dbReference type="PROSITE-ProRule" id="PRU00421"/>
    </source>
</evidence>
<evidence type="ECO:0000255" key="4">
    <source>
        <dbReference type="PROSITE-ProRule" id="PRU00426"/>
    </source>
</evidence>
<evidence type="ECO:0000305" key="5"/>
<organism>
    <name type="scientific">Mycoplasma genitalium (strain ATCC 33530 / DSM 19775 / NCTC 10195 / G37)</name>
    <name type="common">Mycoplasmoides genitalium</name>
    <dbReference type="NCBI Taxonomy" id="243273"/>
    <lineage>
        <taxon>Bacteria</taxon>
        <taxon>Bacillati</taxon>
        <taxon>Mycoplasmatota</taxon>
        <taxon>Mycoplasmoidales</taxon>
        <taxon>Mycoplasmoidaceae</taxon>
        <taxon>Mycoplasmoides</taxon>
    </lineage>
</organism>
<accession>P47315</accession>
<keyword id="KW-1003">Cell membrane</keyword>
<keyword id="KW-0418">Kinase</keyword>
<keyword id="KW-0472">Membrane</keyword>
<keyword id="KW-0598">Phosphotransferase system</keyword>
<keyword id="KW-1185">Reference proteome</keyword>
<keyword id="KW-0762">Sugar transport</keyword>
<keyword id="KW-0808">Transferase</keyword>
<keyword id="KW-0812">Transmembrane</keyword>
<keyword id="KW-1133">Transmembrane helix</keyword>
<keyword id="KW-0813">Transport</keyword>
<feature type="chain" id="PRO_0000186559" description="PTS system glucose-specific EIICBA component">
    <location>
        <begin position="1"/>
        <end position="908"/>
    </location>
</feature>
<feature type="transmembrane region" description="Helical" evidence="4">
    <location>
        <begin position="31"/>
        <end position="51"/>
    </location>
</feature>
<feature type="transmembrane region" description="Helical" evidence="4">
    <location>
        <begin position="71"/>
        <end position="91"/>
    </location>
</feature>
<feature type="transmembrane region" description="Helical" evidence="4">
    <location>
        <begin position="100"/>
        <end position="120"/>
    </location>
</feature>
<feature type="transmembrane region" description="Helical" evidence="4">
    <location>
        <begin position="155"/>
        <end position="175"/>
    </location>
</feature>
<feature type="transmembrane region" description="Helical" evidence="4">
    <location>
        <begin position="189"/>
        <end position="209"/>
    </location>
</feature>
<feature type="transmembrane region" description="Helical" evidence="4">
    <location>
        <begin position="459"/>
        <end position="479"/>
    </location>
</feature>
<feature type="transmembrane region" description="Helical" evidence="4">
    <location>
        <begin position="487"/>
        <end position="507"/>
    </location>
</feature>
<feature type="transmembrane region" description="Helical" evidence="4">
    <location>
        <begin position="509"/>
        <end position="529"/>
    </location>
</feature>
<feature type="transmembrane region" description="Helical" evidence="4">
    <location>
        <begin position="536"/>
        <end position="556"/>
    </location>
</feature>
<feature type="transmembrane region" description="Helical" evidence="4">
    <location>
        <begin position="571"/>
        <end position="591"/>
    </location>
</feature>
<feature type="domain" description="PTS EIIC type-1; first part" evidence="4">
    <location>
        <begin position="1"/>
        <end position="264"/>
    </location>
</feature>
<feature type="domain" description="PTS EIIC type-1; second part" evidence="4">
    <location>
        <begin position="451"/>
        <end position="602"/>
    </location>
</feature>
<feature type="domain" description="PTS EIIB type-1" evidence="3">
    <location>
        <begin position="631"/>
        <end position="713"/>
    </location>
</feature>
<feature type="domain" description="PTS EIIA type-1" evidence="2">
    <location>
        <begin position="762"/>
        <end position="875"/>
    </location>
</feature>
<feature type="region of interest" description="Unknown">
    <location>
        <begin position="265"/>
        <end position="450"/>
    </location>
</feature>
<feature type="active site" description="Phosphocysteine intermediate; for EIIB activity" evidence="3">
    <location>
        <position position="653"/>
    </location>
</feature>
<feature type="active site" description="Tele-phosphohistidine intermediate; for EIIA activity" evidence="2">
    <location>
        <position position="815"/>
    </location>
</feature>
<protein>
    <recommendedName>
        <fullName evidence="1">PTS system glucose-specific EIICBA component</fullName>
        <ecNumber evidence="1">2.7.1.199</ecNumber>
    </recommendedName>
    <alternativeName>
        <fullName>EII-Glc/EIII-Glc</fullName>
    </alternativeName>
    <alternativeName>
        <fullName evidence="1">EIICBA-Glc</fullName>
    </alternativeName>
    <alternativeName>
        <fullName evidence="5">EIICBA-Glc 1</fullName>
    </alternativeName>
    <domain>
        <recommendedName>
            <fullName evidence="1">Glucose permease IIC component</fullName>
        </recommendedName>
        <alternativeName>
            <fullName evidence="1">PTS system glucose-specific EIIC component</fullName>
        </alternativeName>
    </domain>
    <domain>
        <recommendedName>
            <fullName evidence="1">Glucose-specific phosphotransferase enzyme IIB component</fullName>
        </recommendedName>
        <alternativeName>
            <fullName evidence="1">PTS system glucose-specific EIIB component</fullName>
        </alternativeName>
    </domain>
    <domain>
        <recommendedName>
            <fullName evidence="1">Glucose-specific phosphotransferase enzyme IIA component</fullName>
        </recommendedName>
        <alternativeName>
            <fullName evidence="1">PTS system glucose-specific EIIA component</fullName>
        </alternativeName>
    </domain>
</protein>
<reference key="1">
    <citation type="journal article" date="1995" name="Science">
        <title>The minimal gene complement of Mycoplasma genitalium.</title>
        <authorList>
            <person name="Fraser C.M."/>
            <person name="Gocayne J.D."/>
            <person name="White O."/>
            <person name="Adams M.D."/>
            <person name="Clayton R.A."/>
            <person name="Fleischmann R.D."/>
            <person name="Bult C.J."/>
            <person name="Kerlavage A.R."/>
            <person name="Sutton G.G."/>
            <person name="Kelley J.M."/>
            <person name="Fritchman J.L."/>
            <person name="Weidman J.F."/>
            <person name="Small K.V."/>
            <person name="Sandusky M."/>
            <person name="Fuhrmann J.L."/>
            <person name="Nguyen D.T."/>
            <person name="Utterback T.R."/>
            <person name="Saudek D.M."/>
            <person name="Phillips C.A."/>
            <person name="Merrick J.M."/>
            <person name="Tomb J.-F."/>
            <person name="Dougherty B.A."/>
            <person name="Bott K.F."/>
            <person name="Hu P.-C."/>
            <person name="Lucier T.S."/>
            <person name="Peterson S.N."/>
            <person name="Smith H.O."/>
            <person name="Hutchison C.A. III"/>
            <person name="Venter J.C."/>
        </authorList>
    </citation>
    <scope>NUCLEOTIDE SEQUENCE [LARGE SCALE GENOMIC DNA]</scope>
    <source>
        <strain>ATCC 33530 / DSM 19775 / NCTC 10195 / G37</strain>
    </source>
</reference>
<reference key="2">
    <citation type="journal article" date="1993" name="J. Bacteriol.">
        <title>A survey of the Mycoplasma genitalium genome by using random sequencing.</title>
        <authorList>
            <person name="Peterson S.N."/>
            <person name="Hu P.-C."/>
            <person name="Bott K.F."/>
            <person name="Hutchison C.A. III"/>
        </authorList>
    </citation>
    <scope>NUCLEOTIDE SEQUENCE [GENOMIC DNA] OF 284-375</scope>
    <source>
        <strain>ATCC 33530 / DSM 19775 / NCTC 10195 / G37</strain>
    </source>
</reference>
<reference key="3">
    <citation type="journal article" date="1996" name="Microb. Comp. Genomics">
        <title>Novel phosphotransferase system genes revealed by bacterial genome analysis: the complete complement of pts genes in Mycoplasma genitalium.</title>
        <authorList>
            <person name="Reizer J."/>
            <person name="Paulsen I.T."/>
            <person name="Reizer A."/>
            <person name="Titgemeyer F."/>
            <person name="Saier M.H. Jr."/>
        </authorList>
    </citation>
    <scope>DISCUSSION OF SEQUENCE</scope>
</reference>
<sequence length="908" mass="98399">MQISLVKIRNKFKQRNRGSFRQWVGKLSNGLMIPIAVLPLAGIFLGIGDAISSNSSGIVGVKFFGEFIKQGGNVVFANLPILFAVAIAITFSQDAGVAGFSAFVFWATMNAFMSSLIIPVDANNTASGYNILYWKAVPQSAIASTLGLNSLSTSVFGGIIVGALTAYLYNKFYAIRLPDVIGFFSGTRFVPIICMTIAIPVALLLLMVWPGVSILLNLIGTGLGILGGRGYGANSLIFGYIERALIPFGVHHAFYAPLWYTSAGGSLQEIANQQVWIRAPGSDYVTRVIGWEDFNTPGKWVIPAALANGTSGMMNGATTTGQDSTSALSKYMSKESTNFLSWKELVDGLTRKGNFDELAKNGLLDGSNKIWIGLNQSGILGKKVLLSDGKDYTITFKTFANTTPTFWSHGAHALLPISGTPSAITNGVTVNGTANSKTYNVSQFTVAVPSLNPAQYSQGKFPFMLIGIPAAGLAMILAAPKGRRKEASSIIGSAAFTSFLTGITEPFEFTFLFLAPWLFYGIHAVLAAVSFWLMNLLSANVGQTFSGSFIDFILYGALPDGRGWLANSYLVPIIGIFLALIYFPTFYFLTIRFNLATPGRGGKLITKKEYLAAKAAQKTDQTTNTNFNQTQIEAGMLLRAYGGSENIAELGACITKLRVTVKNPELVNETIIKDLGAAGVMRTTPTFFVAVFGTRAAVYKSAMQDIIQGKVNWTELQKVLDKNDSTVEKPEIKPTPVLKVQDEIVILSPVNGTLKPLTQVPDDTFKNRLVGDGIAILPSDGHFKAPGDVGVKTELAFPTGHAFIFDVDGVKVMLHIGIDTVKINADKKPGEQLEVFDVKTKQGEYTKLKSESVVEVDLKKLKRKYDPITPFIVMQESLDNFKLVPIRQRGEIKVGQPLFKLIYKDKKS</sequence>
<name>PTG3C_MYCGE</name>
<gene>
    <name type="primary">ptsG</name>
    <name type="ordered locus">MG069</name>
</gene>
<dbReference type="EC" id="2.7.1.199" evidence="1"/>
<dbReference type="EMBL" id="L43967">
    <property type="protein sequence ID" value="AAC71287.1"/>
    <property type="molecule type" value="Genomic_DNA"/>
</dbReference>
<dbReference type="EMBL" id="U02207">
    <property type="protein sequence ID" value="AAD12499.1"/>
    <property type="molecule type" value="Genomic_DNA"/>
</dbReference>
<dbReference type="PIR" id="F64207">
    <property type="entry name" value="F64207"/>
</dbReference>
<dbReference type="RefSeq" id="WP_009885925.1">
    <property type="nucleotide sequence ID" value="NC_000908.2"/>
</dbReference>
<dbReference type="SMR" id="P47315"/>
<dbReference type="FunCoup" id="P47315">
    <property type="interactions" value="28"/>
</dbReference>
<dbReference type="STRING" id="243273.MG_069"/>
<dbReference type="GeneID" id="88282192"/>
<dbReference type="KEGG" id="mge:MG_069"/>
<dbReference type="eggNOG" id="COG1263">
    <property type="taxonomic scope" value="Bacteria"/>
</dbReference>
<dbReference type="eggNOG" id="COG1264">
    <property type="taxonomic scope" value="Bacteria"/>
</dbReference>
<dbReference type="eggNOG" id="COG2190">
    <property type="taxonomic scope" value="Bacteria"/>
</dbReference>
<dbReference type="HOGENOM" id="CLU_012312_1_1_14"/>
<dbReference type="InParanoid" id="P47315"/>
<dbReference type="OrthoDB" id="9764327at2"/>
<dbReference type="BioCyc" id="MGEN243273:G1GJ2-81-MONOMER"/>
<dbReference type="Proteomes" id="UP000000807">
    <property type="component" value="Chromosome"/>
</dbReference>
<dbReference type="GO" id="GO:0005886">
    <property type="term" value="C:plasma membrane"/>
    <property type="evidence" value="ECO:0000318"/>
    <property type="project" value="GO_Central"/>
</dbReference>
<dbReference type="GO" id="GO:0016301">
    <property type="term" value="F:kinase activity"/>
    <property type="evidence" value="ECO:0007669"/>
    <property type="project" value="UniProtKB-KW"/>
</dbReference>
<dbReference type="GO" id="GO:0008982">
    <property type="term" value="F:protein-N(PI)-phosphohistidine-sugar phosphotransferase activity"/>
    <property type="evidence" value="ECO:0007669"/>
    <property type="project" value="InterPro"/>
</dbReference>
<dbReference type="GO" id="GO:0090563">
    <property type="term" value="F:protein-phosphocysteine-sugar phosphotransferase activity"/>
    <property type="evidence" value="ECO:0000318"/>
    <property type="project" value="GO_Central"/>
</dbReference>
<dbReference type="GO" id="GO:0009401">
    <property type="term" value="P:phosphoenolpyruvate-dependent sugar phosphotransferase system"/>
    <property type="evidence" value="ECO:0000318"/>
    <property type="project" value="GO_Central"/>
</dbReference>
<dbReference type="CDD" id="cd00212">
    <property type="entry name" value="PTS_IIB_glc"/>
    <property type="match status" value="1"/>
</dbReference>
<dbReference type="Gene3D" id="2.70.70.10">
    <property type="entry name" value="Glucose Permease (Domain IIA)"/>
    <property type="match status" value="1"/>
</dbReference>
<dbReference type="Gene3D" id="3.30.1360.60">
    <property type="entry name" value="Glucose permease domain IIB"/>
    <property type="match status" value="1"/>
</dbReference>
<dbReference type="InterPro" id="IPR011055">
    <property type="entry name" value="Dup_hybrid_motif"/>
</dbReference>
<dbReference type="InterPro" id="IPR036878">
    <property type="entry name" value="Glu_permease_IIB"/>
</dbReference>
<dbReference type="InterPro" id="IPR018113">
    <property type="entry name" value="PTrfase_EIIB_Cys"/>
</dbReference>
<dbReference type="InterPro" id="IPR001127">
    <property type="entry name" value="PTS_EIIA_1_perm"/>
</dbReference>
<dbReference type="InterPro" id="IPR003352">
    <property type="entry name" value="PTS_EIIC"/>
</dbReference>
<dbReference type="InterPro" id="IPR013013">
    <property type="entry name" value="PTS_EIIC_1"/>
</dbReference>
<dbReference type="InterPro" id="IPR050429">
    <property type="entry name" value="PTS_Glucose_EIICBA"/>
</dbReference>
<dbReference type="InterPro" id="IPR001996">
    <property type="entry name" value="PTS_IIB_1"/>
</dbReference>
<dbReference type="NCBIfam" id="TIGR00826">
    <property type="entry name" value="EIIB_glc"/>
    <property type="match status" value="1"/>
</dbReference>
<dbReference type="NCBIfam" id="TIGR00830">
    <property type="entry name" value="PTBA"/>
    <property type="match status" value="1"/>
</dbReference>
<dbReference type="PANTHER" id="PTHR30009">
    <property type="entry name" value="CYTOCHROME C-TYPE SYNTHESIS PROTEIN AND PTS TRANSMEMBRANE COMPONENT"/>
    <property type="match status" value="1"/>
</dbReference>
<dbReference type="PANTHER" id="PTHR30009:SF20">
    <property type="entry name" value="PTS SYSTEM GLUCOSE-SPECIFIC EIICB COMPONENT-RELATED"/>
    <property type="match status" value="1"/>
</dbReference>
<dbReference type="Pfam" id="PF00358">
    <property type="entry name" value="PTS_EIIA_1"/>
    <property type="match status" value="1"/>
</dbReference>
<dbReference type="Pfam" id="PF00367">
    <property type="entry name" value="PTS_EIIB"/>
    <property type="match status" value="1"/>
</dbReference>
<dbReference type="Pfam" id="PF02378">
    <property type="entry name" value="PTS_EIIC"/>
    <property type="match status" value="2"/>
</dbReference>
<dbReference type="SUPFAM" id="SSF51261">
    <property type="entry name" value="Duplicated hybrid motif"/>
    <property type="match status" value="1"/>
</dbReference>
<dbReference type="SUPFAM" id="SSF55604">
    <property type="entry name" value="Glucose permease domain IIB"/>
    <property type="match status" value="1"/>
</dbReference>
<dbReference type="PROSITE" id="PS51093">
    <property type="entry name" value="PTS_EIIA_TYPE_1"/>
    <property type="match status" value="1"/>
</dbReference>
<dbReference type="PROSITE" id="PS00371">
    <property type="entry name" value="PTS_EIIA_TYPE_1_HIS"/>
    <property type="match status" value="1"/>
</dbReference>
<dbReference type="PROSITE" id="PS51098">
    <property type="entry name" value="PTS_EIIB_TYPE_1"/>
    <property type="match status" value="1"/>
</dbReference>
<dbReference type="PROSITE" id="PS51103">
    <property type="entry name" value="PTS_EIIC_TYPE_1"/>
    <property type="match status" value="1"/>
</dbReference>
<proteinExistence type="inferred from homology"/>
<comment type="function">
    <text evidence="1">The phosphoenolpyruvate-dependent sugar phosphotransferase system (sugar PTS), a major carbohydrate active transport system, catalyzes the phosphorylation of incoming sugar substrates concomitantly with their translocation across the cell membrane. This system is involved in glucose transport.</text>
</comment>
<comment type="catalytic activity">
    <reaction evidence="1">
        <text>N(pros)-phospho-L-histidyl-[protein] + D-glucose(out) = D-glucose 6-phosphate(in) + L-histidyl-[protein]</text>
        <dbReference type="Rhea" id="RHEA:33367"/>
        <dbReference type="Rhea" id="RHEA-COMP:9745"/>
        <dbReference type="Rhea" id="RHEA-COMP:9746"/>
        <dbReference type="ChEBI" id="CHEBI:4167"/>
        <dbReference type="ChEBI" id="CHEBI:29979"/>
        <dbReference type="ChEBI" id="CHEBI:61548"/>
        <dbReference type="ChEBI" id="CHEBI:64837"/>
        <dbReference type="EC" id="2.7.1.199"/>
    </reaction>
</comment>
<comment type="subcellular location">
    <subcellularLocation>
        <location evidence="4">Cell membrane</location>
        <topology evidence="4">Multi-pass membrane protein</topology>
    </subcellularLocation>
</comment>
<comment type="domain">
    <text evidence="4">The EIIC domain forms the PTS system translocation channel and contains the specific substrate-binding site.</text>
</comment>
<comment type="domain">
    <text evidence="3">The EIIB domain is phosphorylated by phospho-EIIA on a cysteinyl or histidyl residue, depending on the transported sugar. Then, it transfers the phosphoryl group to the sugar substrate concomitantly with the sugar uptake processed by the EIIC domain.</text>
</comment>
<comment type="domain">
    <text evidence="2">The EIIA domain is phosphorylated by phospho-HPr on a histidyl residue. Then, it transfers the phosphoryl group to the EIIB domain.</text>
</comment>